<accession>P33296</accession>
<accession>D3DM07</accession>
<organism>
    <name type="scientific">Saccharomyces cerevisiae (strain ATCC 204508 / S288c)</name>
    <name type="common">Baker's yeast</name>
    <dbReference type="NCBI Taxonomy" id="559292"/>
    <lineage>
        <taxon>Eukaryota</taxon>
        <taxon>Fungi</taxon>
        <taxon>Dikarya</taxon>
        <taxon>Ascomycota</taxon>
        <taxon>Saccharomycotina</taxon>
        <taxon>Saccharomycetes</taxon>
        <taxon>Saccharomycetales</taxon>
        <taxon>Saccharomycetaceae</taxon>
        <taxon>Saccharomyces</taxon>
    </lineage>
</organism>
<comment type="function">
    <text evidence="2 4 6 8">Catalyzes the covalent attachment of ubiquitin to other proteins. Functions in degradation of misfolded or regulated proteins localized in the endoplasmic reticulum (ER) lumen or membrane via the ubiquitin-proteasome system. Cognate E2 conjugating enzyme for the DOA10 ubiquitin ligase complex, which is part of the ERAD-C pathway responsible for the rapid degradation of membrane proteins with misfolded cytoplasmic domains.</text>
</comment>
<comment type="catalytic activity">
    <reaction evidence="2">
        <text>S-ubiquitinyl-[E1 ubiquitin-activating enzyme]-L-cysteine + [E2 ubiquitin-conjugating enzyme]-L-cysteine = [E1 ubiquitin-activating enzyme]-L-cysteine + S-ubiquitinyl-[E2 ubiquitin-conjugating enzyme]-L-cysteine.</text>
        <dbReference type="EC" id="2.3.2.23"/>
    </reaction>
</comment>
<comment type="pathway">
    <text evidence="2">Protein modification; protein ubiquitination.</text>
</comment>
<comment type="interaction">
    <interactant intactId="EBI-19745">
        <id>P33296</id>
    </interactant>
    <interactant intactId="EBI-16219">
        <id>P39940</id>
        <label>RSP5</label>
    </interactant>
    <organismsDiffer>false</organismsDiffer>
    <experiments>2</experiments>
</comment>
<comment type="subcellular location">
    <subcellularLocation>
        <location evidence="7">Endoplasmic reticulum membrane</location>
    </subcellularLocation>
</comment>
<comment type="miscellaneous">
    <text evidence="5">Present with 1900 molecules/cell in log phase SD medium.</text>
</comment>
<comment type="similarity">
    <text evidence="2">Belongs to the ubiquitin-conjugating enzyme family.</text>
</comment>
<proteinExistence type="evidence at protein level"/>
<sequence>MATKQAHKRLTKEYKLMVENPPPYILARPNEDNILEWHYIITGPADTPYKGGQYHGTLTFPSDYPYKPPAIRMITPNGRFKPNTRLCLSMSDYHPDTWNPGWSVSTILNGLLSFMTSDEATTGSITTSDHQKKTLARNSISYNTFQNVRFKLIFPEVVQENVETLEKRKLDEGDAANTGDETEDPFTKAAKEKVISLEEILDPEDRIRAEQALRQSENNSKKDGKEPNDSSSMVYIGIAIFLFLVGLFMK</sequence>
<feature type="chain" id="PRO_0000082552" description="Ubiquitin-conjugating enzyme E2 6">
    <location>
        <begin position="1"/>
        <end position="250"/>
    </location>
</feature>
<feature type="topological domain" description="Cytoplasmic" evidence="1">
    <location>
        <begin position="1"/>
        <end position="232"/>
    </location>
</feature>
<feature type="transmembrane region" description="Helical" evidence="1">
    <location>
        <begin position="233"/>
        <end position="249"/>
    </location>
</feature>
<feature type="domain" description="UBC core" evidence="2">
    <location>
        <begin position="5"/>
        <end position="167"/>
    </location>
</feature>
<feature type="region of interest" description="Disordered" evidence="3">
    <location>
        <begin position="209"/>
        <end position="229"/>
    </location>
</feature>
<feature type="compositionally biased region" description="Basic and acidic residues" evidence="3">
    <location>
        <begin position="219"/>
        <end position="228"/>
    </location>
</feature>
<feature type="active site" description="Glycyl thioester intermediate" evidence="2">
    <location>
        <position position="87"/>
    </location>
</feature>
<feature type="modified residue" description="Phosphoserine" evidence="11">
    <location>
        <position position="139"/>
    </location>
</feature>
<feature type="modified residue" description="Phosphothreonine" evidence="9 10">
    <location>
        <position position="178"/>
    </location>
</feature>
<feature type="mutagenesis site" description="Loss of activity.">
    <original>C</original>
    <variation>S</variation>
    <location>
        <position position="87"/>
    </location>
</feature>
<feature type="helix" evidence="12">
    <location>
        <begin position="4"/>
        <end position="19"/>
    </location>
</feature>
<feature type="strand" evidence="12">
    <location>
        <begin position="25"/>
        <end position="30"/>
    </location>
</feature>
<feature type="strand" evidence="12">
    <location>
        <begin position="33"/>
        <end position="42"/>
    </location>
</feature>
<feature type="turn" evidence="12">
    <location>
        <begin position="48"/>
        <end position="51"/>
    </location>
</feature>
<feature type="strand" evidence="12">
    <location>
        <begin position="53"/>
        <end position="59"/>
    </location>
</feature>
<feature type="turn" evidence="12">
    <location>
        <begin position="62"/>
        <end position="65"/>
    </location>
</feature>
<feature type="strand" evidence="12">
    <location>
        <begin position="70"/>
        <end position="73"/>
    </location>
</feature>
<feature type="strand" evidence="12">
    <location>
        <begin position="78"/>
        <end position="80"/>
    </location>
</feature>
<feature type="strand" evidence="12">
    <location>
        <begin position="89"/>
        <end position="91"/>
    </location>
</feature>
<feature type="helix" evidence="12">
    <location>
        <begin position="95"/>
        <end position="97"/>
    </location>
</feature>
<feature type="helix" evidence="12">
    <location>
        <begin position="104"/>
        <end position="116"/>
    </location>
</feature>
<feature type="helix" evidence="12">
    <location>
        <begin position="129"/>
        <end position="145"/>
    </location>
</feature>
<feature type="helix" evidence="12">
    <location>
        <begin position="148"/>
        <end position="153"/>
    </location>
</feature>
<feature type="helix" evidence="12">
    <location>
        <begin position="155"/>
        <end position="168"/>
    </location>
</feature>
<reference key="1">
    <citation type="journal article" date="1993" name="Nature">
        <title>A protein translocation defect linked to ubiquitin conjugation at the endoplasmic reticulum.</title>
        <authorList>
            <person name="Sommer T."/>
            <person name="Jentsch S."/>
        </authorList>
    </citation>
    <scope>NUCLEOTIDE SEQUENCE [GENOMIC DNA]</scope>
    <scope>SUBCELLULAR LOCATION</scope>
</reference>
<reference key="2">
    <citation type="journal article" date="1997" name="Nature">
        <title>The nucleotide sequence of Saccharomyces cerevisiae chromosome V.</title>
        <authorList>
            <person name="Dietrich F.S."/>
            <person name="Mulligan J.T."/>
            <person name="Hennessy K.M."/>
            <person name="Yelton M.A."/>
            <person name="Allen E."/>
            <person name="Araujo R."/>
            <person name="Aviles E."/>
            <person name="Berno A."/>
            <person name="Brennan T."/>
            <person name="Carpenter J."/>
            <person name="Chen E."/>
            <person name="Cherry J.M."/>
            <person name="Chung E."/>
            <person name="Duncan M."/>
            <person name="Guzman E."/>
            <person name="Hartzell G."/>
            <person name="Hunicke-Smith S."/>
            <person name="Hyman R.W."/>
            <person name="Kayser A."/>
            <person name="Komp C."/>
            <person name="Lashkari D."/>
            <person name="Lew H."/>
            <person name="Lin D."/>
            <person name="Mosedale D."/>
            <person name="Nakahara K."/>
            <person name="Namath A."/>
            <person name="Norgren R."/>
            <person name="Oefner P."/>
            <person name="Oh C."/>
            <person name="Petel F.X."/>
            <person name="Roberts D."/>
            <person name="Sehl P."/>
            <person name="Schramm S."/>
            <person name="Shogren T."/>
            <person name="Smith V."/>
            <person name="Taylor P."/>
            <person name="Wei Y."/>
            <person name="Botstein D."/>
            <person name="Davis R.W."/>
        </authorList>
    </citation>
    <scope>NUCLEOTIDE SEQUENCE [LARGE SCALE GENOMIC DNA]</scope>
    <source>
        <strain>ATCC 204508 / S288c</strain>
    </source>
</reference>
<reference key="3">
    <citation type="journal article" date="2014" name="G3 (Bethesda)">
        <title>The reference genome sequence of Saccharomyces cerevisiae: Then and now.</title>
        <authorList>
            <person name="Engel S.R."/>
            <person name="Dietrich F.S."/>
            <person name="Fisk D.G."/>
            <person name="Binkley G."/>
            <person name="Balakrishnan R."/>
            <person name="Costanzo M.C."/>
            <person name="Dwight S.S."/>
            <person name="Hitz B.C."/>
            <person name="Karra K."/>
            <person name="Nash R.S."/>
            <person name="Weng S."/>
            <person name="Wong E.D."/>
            <person name="Lloyd P."/>
            <person name="Skrzypek M.S."/>
            <person name="Miyasato S.R."/>
            <person name="Simison M."/>
            <person name="Cherry J.M."/>
        </authorList>
    </citation>
    <scope>GENOME REANNOTATION</scope>
    <source>
        <strain>ATCC 204508 / S288c</strain>
    </source>
</reference>
<reference key="4">
    <citation type="journal article" date="2003" name="Nature">
        <title>Global analysis of protein expression in yeast.</title>
        <authorList>
            <person name="Ghaemmaghami S."/>
            <person name="Huh W.-K."/>
            <person name="Bower K."/>
            <person name="Howson R.W."/>
            <person name="Belle A."/>
            <person name="Dephoure N."/>
            <person name="O'Shea E.K."/>
            <person name="Weissman J.S."/>
        </authorList>
    </citation>
    <scope>LEVEL OF PROTEIN EXPRESSION [LARGE SCALE ANALYSIS]</scope>
</reference>
<reference key="5">
    <citation type="journal article" date="1993" name="Cell">
        <title>Multiple ubiquitin-conjugating enzymes participate in the in vivo degradation of the yeast MAT alpha 2 repressor.</title>
        <authorList>
            <person name="Chen P."/>
            <person name="Johnson P."/>
            <person name="Sommer T."/>
            <person name="Jentsch S."/>
            <person name="Hochstrasser M."/>
        </authorList>
    </citation>
    <scope>FUNCTION</scope>
</reference>
<reference key="6">
    <citation type="journal article" date="1998" name="Cell">
        <title>Degradation signal masking by heterodimerization of MATalpha2 and MATa1 blocks their mutual destruction by the ubiquitin-proteasome pathway.</title>
        <authorList>
            <person name="Johnson P.R."/>
            <person name="Swanson R."/>
            <person name="Rakhilina L."/>
            <person name="Hochstrasser M."/>
        </authorList>
    </citation>
    <scope>FUNCTION</scope>
</reference>
<reference key="7">
    <citation type="journal article" date="2001" name="Genes Dev.">
        <title>A conserved ubiquitin ligase of the nuclear envelope/endoplasmic reticulum that functions in both ER-associated and Matalpha2 repressor degradation.</title>
        <authorList>
            <person name="Swanson R."/>
            <person name="Locher M."/>
            <person name="Hochstrasser M."/>
        </authorList>
    </citation>
    <scope>FUNCTION</scope>
</reference>
<reference key="8">
    <citation type="journal article" date="2005" name="Nat. Cell Biol.">
        <title>Ubx2 links the Cdc48 complex to ER-associated protein degradation.</title>
        <authorList>
            <person name="Neuber O."/>
            <person name="Jarosch E."/>
            <person name="Volkwein C."/>
            <person name="Walter J."/>
            <person name="Sommer T."/>
        </authorList>
    </citation>
    <scope>INTERACTION WITH SSM4</scope>
</reference>
<reference key="9">
    <citation type="journal article" date="2007" name="J. Proteome Res.">
        <title>Large-scale phosphorylation analysis of alpha-factor-arrested Saccharomyces cerevisiae.</title>
        <authorList>
            <person name="Li X."/>
            <person name="Gerber S.A."/>
            <person name="Rudner A.D."/>
            <person name="Beausoleil S.A."/>
            <person name="Haas W."/>
            <person name="Villen J."/>
            <person name="Elias J.E."/>
            <person name="Gygi S.P."/>
        </authorList>
    </citation>
    <scope>PHOSPHORYLATION [LARGE SCALE ANALYSIS] AT THR-178</scope>
    <scope>IDENTIFICATION BY MASS SPECTROMETRY [LARGE SCALE ANALYSIS]</scope>
    <source>
        <strain>ADR376</strain>
    </source>
</reference>
<reference key="10">
    <citation type="journal article" date="2008" name="Mol. Cell. Proteomics">
        <title>A multidimensional chromatography technology for in-depth phosphoproteome analysis.</title>
        <authorList>
            <person name="Albuquerque C.P."/>
            <person name="Smolka M.B."/>
            <person name="Payne S.H."/>
            <person name="Bafna V."/>
            <person name="Eng J."/>
            <person name="Zhou H."/>
        </authorList>
    </citation>
    <scope>PHOSPHORYLATION [LARGE SCALE ANALYSIS] AT THR-178</scope>
    <scope>IDENTIFICATION BY MASS SPECTROMETRY [LARGE SCALE ANALYSIS]</scope>
</reference>
<reference key="11">
    <citation type="journal article" date="2009" name="Science">
        <title>Global analysis of Cdk1 substrate phosphorylation sites provides insights into evolution.</title>
        <authorList>
            <person name="Holt L.J."/>
            <person name="Tuch B.B."/>
            <person name="Villen J."/>
            <person name="Johnson A.D."/>
            <person name="Gygi S.P."/>
            <person name="Morgan D.O."/>
        </authorList>
    </citation>
    <scope>PHOSPHORYLATION [LARGE SCALE ANALYSIS] AT SER-139</scope>
    <scope>IDENTIFICATION BY MASS SPECTROMETRY [LARGE SCALE ANALYSIS]</scope>
</reference>
<name>UBC6_YEAST</name>
<gene>
    <name type="primary">UBC6</name>
    <name type="synonym">DOA2</name>
    <name type="ordered locus">YER100W</name>
</gene>
<dbReference type="EC" id="2.3.2.23"/>
<dbReference type="EMBL" id="X73234">
    <property type="protein sequence ID" value="CAA51706.1"/>
    <property type="molecule type" value="Genomic_DNA"/>
</dbReference>
<dbReference type="EMBL" id="U18839">
    <property type="protein sequence ID" value="AAB64655.1"/>
    <property type="molecule type" value="Genomic_DNA"/>
</dbReference>
<dbReference type="EMBL" id="BK006939">
    <property type="protein sequence ID" value="DAA07761.1"/>
    <property type="molecule type" value="Genomic_DNA"/>
</dbReference>
<dbReference type="PIR" id="S36769">
    <property type="entry name" value="S36769"/>
</dbReference>
<dbReference type="RefSeq" id="NP_011026.3">
    <property type="nucleotide sequence ID" value="NM_001178991.3"/>
</dbReference>
<dbReference type="PDB" id="9EN5">
    <property type="method" value="X-ray"/>
    <property type="resolution" value="1.33 A"/>
    <property type="chains" value="A=1-172"/>
</dbReference>
<dbReference type="PDB" id="9EWP">
    <property type="method" value="X-ray"/>
    <property type="resolution" value="1.21 A"/>
    <property type="chains" value="A=1-172"/>
</dbReference>
<dbReference type="PDB" id="9EYH">
    <property type="method" value="X-ray"/>
    <property type="resolution" value="2.60 A"/>
    <property type="chains" value="A/B=1-172"/>
</dbReference>
<dbReference type="PDBsum" id="9EN5"/>
<dbReference type="PDBsum" id="9EWP"/>
<dbReference type="PDBsum" id="9EYH"/>
<dbReference type="SMR" id="P33296"/>
<dbReference type="BioGRID" id="36846">
    <property type="interactions" value="167"/>
</dbReference>
<dbReference type="DIP" id="DIP-1713N"/>
<dbReference type="FunCoup" id="P33296">
    <property type="interactions" value="1143"/>
</dbReference>
<dbReference type="IntAct" id="P33296">
    <property type="interactions" value="28"/>
</dbReference>
<dbReference type="MINT" id="P33296"/>
<dbReference type="STRING" id="4932.YER100W"/>
<dbReference type="iPTMnet" id="P33296"/>
<dbReference type="PaxDb" id="4932-YER100W"/>
<dbReference type="PeptideAtlas" id="P33296"/>
<dbReference type="EnsemblFungi" id="YER100W_mRNA">
    <property type="protein sequence ID" value="YER100W"/>
    <property type="gene ID" value="YER100W"/>
</dbReference>
<dbReference type="GeneID" id="856837"/>
<dbReference type="KEGG" id="sce:YER100W"/>
<dbReference type="AGR" id="SGD:S000000902"/>
<dbReference type="SGD" id="S000000902">
    <property type="gene designation" value="UBC6"/>
</dbReference>
<dbReference type="VEuPathDB" id="FungiDB:YER100W"/>
<dbReference type="eggNOG" id="KOG0894">
    <property type="taxonomic scope" value="Eukaryota"/>
</dbReference>
<dbReference type="GeneTree" id="ENSGT00940000156173"/>
<dbReference type="HOGENOM" id="CLU_041481_1_0_1"/>
<dbReference type="InParanoid" id="P33296"/>
<dbReference type="OMA" id="GWSVATI"/>
<dbReference type="OrthoDB" id="1158011at2759"/>
<dbReference type="BioCyc" id="YEAST:G3O-30265-MONOMER"/>
<dbReference type="Reactome" id="R-SCE-9609523">
    <property type="pathway name" value="Insertion of tail-anchored proteins into the endoplasmic reticulum membrane"/>
</dbReference>
<dbReference type="Reactome" id="R-SCE-983168">
    <property type="pathway name" value="Antigen processing: Ubiquitination &amp; Proteasome degradation"/>
</dbReference>
<dbReference type="UniPathway" id="UPA00143"/>
<dbReference type="BioGRID-ORCS" id="856837">
    <property type="hits" value="7 hits in 10 CRISPR screens"/>
</dbReference>
<dbReference type="PRO" id="PR:P33296"/>
<dbReference type="Proteomes" id="UP000002311">
    <property type="component" value="Chromosome V"/>
</dbReference>
<dbReference type="RNAct" id="P33296">
    <property type="molecule type" value="protein"/>
</dbReference>
<dbReference type="GO" id="GO:0005783">
    <property type="term" value="C:endoplasmic reticulum"/>
    <property type="evidence" value="ECO:0007005"/>
    <property type="project" value="SGD"/>
</dbReference>
<dbReference type="GO" id="GO:0005789">
    <property type="term" value="C:endoplasmic reticulum membrane"/>
    <property type="evidence" value="ECO:0000314"/>
    <property type="project" value="SGD"/>
</dbReference>
<dbReference type="GO" id="GO:0005634">
    <property type="term" value="C:nucleus"/>
    <property type="evidence" value="ECO:0000318"/>
    <property type="project" value="GO_Central"/>
</dbReference>
<dbReference type="GO" id="GO:0005524">
    <property type="term" value="F:ATP binding"/>
    <property type="evidence" value="ECO:0007669"/>
    <property type="project" value="UniProtKB-KW"/>
</dbReference>
<dbReference type="GO" id="GO:0061631">
    <property type="term" value="F:ubiquitin conjugating enzyme activity"/>
    <property type="evidence" value="ECO:0000318"/>
    <property type="project" value="GO_Central"/>
</dbReference>
<dbReference type="GO" id="GO:0004842">
    <property type="term" value="F:ubiquitin-protein transferase activity"/>
    <property type="evidence" value="ECO:0000314"/>
    <property type="project" value="SGD"/>
</dbReference>
<dbReference type="GO" id="GO:0036503">
    <property type="term" value="P:ERAD pathway"/>
    <property type="evidence" value="ECO:0000315"/>
    <property type="project" value="SGD"/>
</dbReference>
<dbReference type="GO" id="GO:0006513">
    <property type="term" value="P:protein monoubiquitination"/>
    <property type="evidence" value="ECO:0000314"/>
    <property type="project" value="SGD"/>
</dbReference>
<dbReference type="GO" id="GO:0000209">
    <property type="term" value="P:protein polyubiquitination"/>
    <property type="evidence" value="ECO:0000315"/>
    <property type="project" value="SGD"/>
</dbReference>
<dbReference type="CDD" id="cd23799">
    <property type="entry name" value="UBCc_UBE2J"/>
    <property type="match status" value="1"/>
</dbReference>
<dbReference type="FunFam" id="3.10.110.10:FF:000023">
    <property type="entry name" value="Ubiquitin-conjugating enzyme E2 J2"/>
    <property type="match status" value="1"/>
</dbReference>
<dbReference type="Gene3D" id="3.10.110.10">
    <property type="entry name" value="Ubiquitin Conjugating Enzyme"/>
    <property type="match status" value="1"/>
</dbReference>
<dbReference type="InterPro" id="IPR050113">
    <property type="entry name" value="Ub_conjugating_enzyme"/>
</dbReference>
<dbReference type="InterPro" id="IPR000608">
    <property type="entry name" value="UBQ-conjugat_E2_core"/>
</dbReference>
<dbReference type="InterPro" id="IPR016135">
    <property type="entry name" value="UBQ-conjugating_enzyme/RWD"/>
</dbReference>
<dbReference type="PANTHER" id="PTHR24067">
    <property type="entry name" value="UBIQUITIN-CONJUGATING ENZYME E2"/>
    <property type="match status" value="1"/>
</dbReference>
<dbReference type="Pfam" id="PF00179">
    <property type="entry name" value="UQ_con"/>
    <property type="match status" value="1"/>
</dbReference>
<dbReference type="SMART" id="SM00212">
    <property type="entry name" value="UBCc"/>
    <property type="match status" value="1"/>
</dbReference>
<dbReference type="SUPFAM" id="SSF54495">
    <property type="entry name" value="UBC-like"/>
    <property type="match status" value="1"/>
</dbReference>
<dbReference type="PROSITE" id="PS50127">
    <property type="entry name" value="UBC_2"/>
    <property type="match status" value="1"/>
</dbReference>
<protein>
    <recommendedName>
        <fullName>Ubiquitin-conjugating enzyme E2 6</fullName>
        <ecNumber>2.3.2.23</ecNumber>
    </recommendedName>
    <alternativeName>
        <fullName>E2 ubiquitin-conjugating enzyme 6</fullName>
    </alternativeName>
    <alternativeName>
        <fullName>Ubiquitin carrier protein UBC6</fullName>
    </alternativeName>
    <alternativeName>
        <fullName>Ubiquitin-protein ligase UBC6</fullName>
    </alternativeName>
</protein>
<keyword id="KW-0002">3D-structure</keyword>
<keyword id="KW-0067">ATP-binding</keyword>
<keyword id="KW-0256">Endoplasmic reticulum</keyword>
<keyword id="KW-0472">Membrane</keyword>
<keyword id="KW-0547">Nucleotide-binding</keyword>
<keyword id="KW-0597">Phosphoprotein</keyword>
<keyword id="KW-1185">Reference proteome</keyword>
<keyword id="KW-0808">Transferase</keyword>
<keyword id="KW-0812">Transmembrane</keyword>
<keyword id="KW-1133">Transmembrane helix</keyword>
<keyword id="KW-0833">Ubl conjugation pathway</keyword>
<evidence type="ECO:0000255" key="1"/>
<evidence type="ECO:0000255" key="2">
    <source>
        <dbReference type="PROSITE-ProRule" id="PRU00388"/>
    </source>
</evidence>
<evidence type="ECO:0000256" key="3">
    <source>
        <dbReference type="SAM" id="MobiDB-lite"/>
    </source>
</evidence>
<evidence type="ECO:0000269" key="4">
    <source>
    </source>
</evidence>
<evidence type="ECO:0000269" key="5">
    <source>
    </source>
</evidence>
<evidence type="ECO:0000269" key="6">
    <source>
    </source>
</evidence>
<evidence type="ECO:0000269" key="7">
    <source>
    </source>
</evidence>
<evidence type="ECO:0000269" key="8">
    <source>
    </source>
</evidence>
<evidence type="ECO:0007744" key="9">
    <source>
    </source>
</evidence>
<evidence type="ECO:0007744" key="10">
    <source>
    </source>
</evidence>
<evidence type="ECO:0007744" key="11">
    <source>
    </source>
</evidence>
<evidence type="ECO:0007829" key="12">
    <source>
        <dbReference type="PDB" id="9EN5"/>
    </source>
</evidence>